<accession>Q39IU7</accession>
<protein>
    <recommendedName>
        <fullName evidence="2">tRNA (guanine-N(7)-)-methyltransferase</fullName>
        <ecNumber evidence="2">2.1.1.33</ecNumber>
    </recommendedName>
    <alternativeName>
        <fullName evidence="2">tRNA (guanine(46)-N(7))-methyltransferase</fullName>
    </alternativeName>
    <alternativeName>
        <fullName evidence="2">tRNA(m7G46)-methyltransferase</fullName>
    </alternativeName>
</protein>
<gene>
    <name evidence="2" type="primary">trmB</name>
    <name type="ordered locus">Bcep18194_A4022</name>
</gene>
<keyword id="KW-0489">Methyltransferase</keyword>
<keyword id="KW-0949">S-adenosyl-L-methionine</keyword>
<keyword id="KW-0808">Transferase</keyword>
<keyword id="KW-0819">tRNA processing</keyword>
<comment type="function">
    <text evidence="2">Catalyzes the formation of N(7)-methylguanine at position 46 (m7G46) in tRNA.</text>
</comment>
<comment type="catalytic activity">
    <reaction evidence="2">
        <text>guanosine(46) in tRNA + S-adenosyl-L-methionine = N(7)-methylguanosine(46) in tRNA + S-adenosyl-L-homocysteine</text>
        <dbReference type="Rhea" id="RHEA:42708"/>
        <dbReference type="Rhea" id="RHEA-COMP:10188"/>
        <dbReference type="Rhea" id="RHEA-COMP:10189"/>
        <dbReference type="ChEBI" id="CHEBI:57856"/>
        <dbReference type="ChEBI" id="CHEBI:59789"/>
        <dbReference type="ChEBI" id="CHEBI:74269"/>
        <dbReference type="ChEBI" id="CHEBI:74480"/>
        <dbReference type="EC" id="2.1.1.33"/>
    </reaction>
</comment>
<comment type="pathway">
    <text evidence="2">tRNA modification; N(7)-methylguanine-tRNA biosynthesis.</text>
</comment>
<comment type="similarity">
    <text evidence="2">Belongs to the class I-like SAM-binding methyltransferase superfamily. TrmB family.</text>
</comment>
<feature type="chain" id="PRO_0000229158" description="tRNA (guanine-N(7)-)-methyltransferase">
    <location>
        <begin position="1"/>
        <end position="255"/>
    </location>
</feature>
<feature type="region of interest" description="Disordered" evidence="3">
    <location>
        <begin position="1"/>
        <end position="21"/>
    </location>
</feature>
<feature type="active site" evidence="1">
    <location>
        <position position="161"/>
    </location>
</feature>
<feature type="binding site" evidence="2">
    <location>
        <position position="86"/>
    </location>
    <ligand>
        <name>S-adenosyl-L-methionine</name>
        <dbReference type="ChEBI" id="CHEBI:59789"/>
    </ligand>
</feature>
<feature type="binding site" evidence="2">
    <location>
        <position position="111"/>
    </location>
    <ligand>
        <name>S-adenosyl-L-methionine</name>
        <dbReference type="ChEBI" id="CHEBI:59789"/>
    </ligand>
</feature>
<feature type="binding site" evidence="2">
    <location>
        <position position="138"/>
    </location>
    <ligand>
        <name>S-adenosyl-L-methionine</name>
        <dbReference type="ChEBI" id="CHEBI:59789"/>
    </ligand>
</feature>
<feature type="binding site" evidence="2">
    <location>
        <position position="161"/>
    </location>
    <ligand>
        <name>S-adenosyl-L-methionine</name>
        <dbReference type="ChEBI" id="CHEBI:59789"/>
    </ligand>
</feature>
<feature type="binding site" evidence="2">
    <location>
        <position position="165"/>
    </location>
    <ligand>
        <name>substrate</name>
    </ligand>
</feature>
<feature type="binding site" evidence="2">
    <location>
        <position position="197"/>
    </location>
    <ligand>
        <name>substrate</name>
    </ligand>
</feature>
<feature type="binding site" evidence="2">
    <location>
        <begin position="232"/>
        <end position="235"/>
    </location>
    <ligand>
        <name>substrate</name>
    </ligand>
</feature>
<dbReference type="EC" id="2.1.1.33" evidence="2"/>
<dbReference type="EMBL" id="CP000151">
    <property type="protein sequence ID" value="ABB07619.1"/>
    <property type="molecule type" value="Genomic_DNA"/>
</dbReference>
<dbReference type="RefSeq" id="WP_011351200.1">
    <property type="nucleotide sequence ID" value="NC_007510.1"/>
</dbReference>
<dbReference type="SMR" id="Q39IU7"/>
<dbReference type="GeneID" id="45093921"/>
<dbReference type="KEGG" id="bur:Bcep18194_A4022"/>
<dbReference type="PATRIC" id="fig|482957.22.peg.902"/>
<dbReference type="HOGENOM" id="CLU_050910_0_1_4"/>
<dbReference type="UniPathway" id="UPA00989"/>
<dbReference type="Proteomes" id="UP000002705">
    <property type="component" value="Chromosome 1"/>
</dbReference>
<dbReference type="GO" id="GO:0043527">
    <property type="term" value="C:tRNA methyltransferase complex"/>
    <property type="evidence" value="ECO:0007669"/>
    <property type="project" value="TreeGrafter"/>
</dbReference>
<dbReference type="GO" id="GO:0008176">
    <property type="term" value="F:tRNA (guanine(46)-N7)-methyltransferase activity"/>
    <property type="evidence" value="ECO:0007669"/>
    <property type="project" value="UniProtKB-UniRule"/>
</dbReference>
<dbReference type="CDD" id="cd02440">
    <property type="entry name" value="AdoMet_MTases"/>
    <property type="match status" value="1"/>
</dbReference>
<dbReference type="FunFam" id="3.40.50.150:FF:000035">
    <property type="entry name" value="tRNA (guanine-N(7)-)-methyltransferase"/>
    <property type="match status" value="1"/>
</dbReference>
<dbReference type="Gene3D" id="3.40.50.150">
    <property type="entry name" value="Vaccinia Virus protein VP39"/>
    <property type="match status" value="1"/>
</dbReference>
<dbReference type="HAMAP" id="MF_01057">
    <property type="entry name" value="tRNA_methyltr_TrmB"/>
    <property type="match status" value="1"/>
</dbReference>
<dbReference type="InterPro" id="IPR029063">
    <property type="entry name" value="SAM-dependent_MTases_sf"/>
</dbReference>
<dbReference type="InterPro" id="IPR003358">
    <property type="entry name" value="tRNA_(Gua-N-7)_MeTrfase_Trmb"/>
</dbReference>
<dbReference type="InterPro" id="IPR055361">
    <property type="entry name" value="tRNA_methyltr_TrmB_bact"/>
</dbReference>
<dbReference type="NCBIfam" id="TIGR00091">
    <property type="entry name" value="tRNA (guanosine(46)-N7)-methyltransferase TrmB"/>
    <property type="match status" value="1"/>
</dbReference>
<dbReference type="PANTHER" id="PTHR23417">
    <property type="entry name" value="3-DEOXY-D-MANNO-OCTULOSONIC-ACID TRANSFERASE/TRNA GUANINE-N 7 - -METHYLTRANSFERASE"/>
    <property type="match status" value="1"/>
</dbReference>
<dbReference type="PANTHER" id="PTHR23417:SF14">
    <property type="entry name" value="PENTACOTRIPEPTIDE-REPEAT REGION OF PRORP DOMAIN-CONTAINING PROTEIN"/>
    <property type="match status" value="1"/>
</dbReference>
<dbReference type="Pfam" id="PF02390">
    <property type="entry name" value="Methyltransf_4"/>
    <property type="match status" value="1"/>
</dbReference>
<dbReference type="SUPFAM" id="SSF53335">
    <property type="entry name" value="S-adenosyl-L-methionine-dependent methyltransferases"/>
    <property type="match status" value="1"/>
</dbReference>
<dbReference type="PROSITE" id="PS51625">
    <property type="entry name" value="SAM_MT_TRMB"/>
    <property type="match status" value="1"/>
</dbReference>
<name>TRMB_BURL3</name>
<evidence type="ECO:0000250" key="1"/>
<evidence type="ECO:0000255" key="2">
    <source>
        <dbReference type="HAMAP-Rule" id="MF_01057"/>
    </source>
</evidence>
<evidence type="ECO:0000256" key="3">
    <source>
        <dbReference type="SAM" id="MobiDB-lite"/>
    </source>
</evidence>
<organism>
    <name type="scientific">Burkholderia lata (strain ATCC 17760 / DSM 23089 / LMG 22485 / NCIMB 9086 / R18194 / 383)</name>
    <dbReference type="NCBI Taxonomy" id="482957"/>
    <lineage>
        <taxon>Bacteria</taxon>
        <taxon>Pseudomonadati</taxon>
        <taxon>Pseudomonadota</taxon>
        <taxon>Betaproteobacteria</taxon>
        <taxon>Burkholderiales</taxon>
        <taxon>Burkholderiaceae</taxon>
        <taxon>Burkholderia</taxon>
        <taxon>Burkholderia cepacia complex</taxon>
    </lineage>
</organism>
<sequence length="255" mass="28439">MMHDDPNEAGLPPHDDAIPDEAAEGADAVNPLHHRRIRSFVTRAGRVSTGQRRAMDELGPRFVVPYAPELPDWNAVFGRSAPRILEIGFGMGASTAEIAANRPGDDFLGVEVHEPGVGALLKLIGEQDLSNIRIIQHDAVEVLEHMLAPESLDGVHIFFPDPWHKARHHKRRLIQPPLVAHLVSRLKPGAYIHCATDWQNYAEQMLEVLGAEPTLENTAADYAPRPDYRPVTKFERRGLRLGHGVWDLVFRKRAA</sequence>
<proteinExistence type="inferred from homology"/>
<reference key="1">
    <citation type="submission" date="2005-10" db="EMBL/GenBank/DDBJ databases">
        <title>Complete sequence of chromosome 1 of Burkholderia sp. 383.</title>
        <authorList>
            <consortium name="US DOE Joint Genome Institute"/>
            <person name="Copeland A."/>
            <person name="Lucas S."/>
            <person name="Lapidus A."/>
            <person name="Barry K."/>
            <person name="Detter J.C."/>
            <person name="Glavina T."/>
            <person name="Hammon N."/>
            <person name="Israni S."/>
            <person name="Pitluck S."/>
            <person name="Chain P."/>
            <person name="Malfatti S."/>
            <person name="Shin M."/>
            <person name="Vergez L."/>
            <person name="Schmutz J."/>
            <person name="Larimer F."/>
            <person name="Land M."/>
            <person name="Kyrpides N."/>
            <person name="Lykidis A."/>
            <person name="Richardson P."/>
        </authorList>
    </citation>
    <scope>NUCLEOTIDE SEQUENCE [LARGE SCALE GENOMIC DNA]</scope>
    <source>
        <strain>ATCC 17760 / DSM 23089 / LMG 22485 / NCIMB 9086 / R18194 / 383</strain>
    </source>
</reference>